<proteinExistence type="inferred from homology"/>
<protein>
    <recommendedName>
        <fullName evidence="1">Tryptophan synthase beta chain</fullName>
        <ecNumber evidence="1">4.2.1.20</ecNumber>
    </recommendedName>
</protein>
<name>TRPB_GEOTN</name>
<gene>
    <name evidence="1" type="primary">trpB</name>
    <name type="ordered locus">GTNG_2134</name>
</gene>
<evidence type="ECO:0000255" key="1">
    <source>
        <dbReference type="HAMAP-Rule" id="MF_00133"/>
    </source>
</evidence>
<keyword id="KW-0028">Amino-acid biosynthesis</keyword>
<keyword id="KW-0057">Aromatic amino acid biosynthesis</keyword>
<keyword id="KW-0456">Lyase</keyword>
<keyword id="KW-0663">Pyridoxal phosphate</keyword>
<keyword id="KW-0822">Tryptophan biosynthesis</keyword>
<accession>A4IQ82</accession>
<organism>
    <name type="scientific">Geobacillus thermodenitrificans (strain NG80-2)</name>
    <dbReference type="NCBI Taxonomy" id="420246"/>
    <lineage>
        <taxon>Bacteria</taxon>
        <taxon>Bacillati</taxon>
        <taxon>Bacillota</taxon>
        <taxon>Bacilli</taxon>
        <taxon>Bacillales</taxon>
        <taxon>Anoxybacillaceae</taxon>
        <taxon>Geobacillus</taxon>
    </lineage>
</organism>
<feature type="chain" id="PRO_1000018347" description="Tryptophan synthase beta chain">
    <location>
        <begin position="1"/>
        <end position="404"/>
    </location>
</feature>
<feature type="modified residue" description="N6-(pyridoxal phosphate)lysine" evidence="1">
    <location>
        <position position="90"/>
    </location>
</feature>
<sequence length="404" mass="44030">MEHVPNEHGRFGDFGGKFVPETLMLPLEEIETELDKALADESFRQEYIRILQHYSGRPTPLTFAPNLTRQLGGAKIYLKREDLNHTGAHKINNAIGQALLAKRMGKKKLIAETGAGQHGVAAATVAAHFGMECIVFMGEEDMKRQELNVFRMKLLGAEVVPVLSGNRTLKDATNEAIRYWVAHCDDHFYMIGSVVGPHPYPKMVREFQRVIGDEAKEQFLAGEGTLPDVIVACVGGGSNAIGMFYPFLQDDVRLVGVEAAGKGIDTPHHAATIAKGTKGVIHGAMTYLLQDEYGQIIEPYSISAGLDYPGVGPEHAYLASIGRVRYESVTDEEAVAAFQLLAQTEGIIPAIESAHAVAKAVELARQMTPDETVLICLSGRGDKDVQMMMHHLGVKEGEDVASAR</sequence>
<dbReference type="EC" id="4.2.1.20" evidence="1"/>
<dbReference type="EMBL" id="CP000557">
    <property type="protein sequence ID" value="ABO67486.1"/>
    <property type="molecule type" value="Genomic_DNA"/>
</dbReference>
<dbReference type="RefSeq" id="WP_011887692.1">
    <property type="nucleotide sequence ID" value="NC_009328.1"/>
</dbReference>
<dbReference type="SMR" id="A4IQ82"/>
<dbReference type="GeneID" id="87623766"/>
<dbReference type="KEGG" id="gtn:GTNG_2134"/>
<dbReference type="eggNOG" id="COG0133">
    <property type="taxonomic scope" value="Bacteria"/>
</dbReference>
<dbReference type="HOGENOM" id="CLU_016734_3_1_9"/>
<dbReference type="UniPathway" id="UPA00035">
    <property type="reaction ID" value="UER00044"/>
</dbReference>
<dbReference type="Proteomes" id="UP000001578">
    <property type="component" value="Chromosome"/>
</dbReference>
<dbReference type="GO" id="GO:0005737">
    <property type="term" value="C:cytoplasm"/>
    <property type="evidence" value="ECO:0007669"/>
    <property type="project" value="TreeGrafter"/>
</dbReference>
<dbReference type="GO" id="GO:0004834">
    <property type="term" value="F:tryptophan synthase activity"/>
    <property type="evidence" value="ECO:0007669"/>
    <property type="project" value="UniProtKB-UniRule"/>
</dbReference>
<dbReference type="CDD" id="cd06446">
    <property type="entry name" value="Trp-synth_B"/>
    <property type="match status" value="1"/>
</dbReference>
<dbReference type="FunFam" id="3.40.50.1100:FF:000001">
    <property type="entry name" value="Tryptophan synthase beta chain"/>
    <property type="match status" value="1"/>
</dbReference>
<dbReference type="FunFam" id="3.40.50.1100:FF:000004">
    <property type="entry name" value="Tryptophan synthase beta chain"/>
    <property type="match status" value="1"/>
</dbReference>
<dbReference type="Gene3D" id="3.40.50.1100">
    <property type="match status" value="2"/>
</dbReference>
<dbReference type="HAMAP" id="MF_00133">
    <property type="entry name" value="Trp_synth_beta"/>
    <property type="match status" value="1"/>
</dbReference>
<dbReference type="InterPro" id="IPR006653">
    <property type="entry name" value="Trp_synth_b_CS"/>
</dbReference>
<dbReference type="InterPro" id="IPR006654">
    <property type="entry name" value="Trp_synth_beta"/>
</dbReference>
<dbReference type="InterPro" id="IPR023026">
    <property type="entry name" value="Trp_synth_beta/beta-like"/>
</dbReference>
<dbReference type="InterPro" id="IPR001926">
    <property type="entry name" value="TrpB-like_PALP"/>
</dbReference>
<dbReference type="InterPro" id="IPR036052">
    <property type="entry name" value="TrpB-like_PALP_sf"/>
</dbReference>
<dbReference type="NCBIfam" id="TIGR00263">
    <property type="entry name" value="trpB"/>
    <property type="match status" value="1"/>
</dbReference>
<dbReference type="PANTHER" id="PTHR48077:SF3">
    <property type="entry name" value="TRYPTOPHAN SYNTHASE"/>
    <property type="match status" value="1"/>
</dbReference>
<dbReference type="PANTHER" id="PTHR48077">
    <property type="entry name" value="TRYPTOPHAN SYNTHASE-RELATED"/>
    <property type="match status" value="1"/>
</dbReference>
<dbReference type="Pfam" id="PF00291">
    <property type="entry name" value="PALP"/>
    <property type="match status" value="1"/>
</dbReference>
<dbReference type="PIRSF" id="PIRSF001413">
    <property type="entry name" value="Trp_syn_beta"/>
    <property type="match status" value="1"/>
</dbReference>
<dbReference type="SUPFAM" id="SSF53686">
    <property type="entry name" value="Tryptophan synthase beta subunit-like PLP-dependent enzymes"/>
    <property type="match status" value="1"/>
</dbReference>
<dbReference type="PROSITE" id="PS00168">
    <property type="entry name" value="TRP_SYNTHASE_BETA"/>
    <property type="match status" value="1"/>
</dbReference>
<comment type="function">
    <text evidence="1">The beta subunit is responsible for the synthesis of L-tryptophan from indole and L-serine.</text>
</comment>
<comment type="catalytic activity">
    <reaction evidence="1">
        <text>(1S,2R)-1-C-(indol-3-yl)glycerol 3-phosphate + L-serine = D-glyceraldehyde 3-phosphate + L-tryptophan + H2O</text>
        <dbReference type="Rhea" id="RHEA:10532"/>
        <dbReference type="ChEBI" id="CHEBI:15377"/>
        <dbReference type="ChEBI" id="CHEBI:33384"/>
        <dbReference type="ChEBI" id="CHEBI:57912"/>
        <dbReference type="ChEBI" id="CHEBI:58866"/>
        <dbReference type="ChEBI" id="CHEBI:59776"/>
        <dbReference type="EC" id="4.2.1.20"/>
    </reaction>
</comment>
<comment type="cofactor">
    <cofactor evidence="1">
        <name>pyridoxal 5'-phosphate</name>
        <dbReference type="ChEBI" id="CHEBI:597326"/>
    </cofactor>
</comment>
<comment type="pathway">
    <text evidence="1">Amino-acid biosynthesis; L-tryptophan biosynthesis; L-tryptophan from chorismate: step 5/5.</text>
</comment>
<comment type="subunit">
    <text evidence="1">Tetramer of two alpha and two beta chains.</text>
</comment>
<comment type="similarity">
    <text evidence="1">Belongs to the TrpB family.</text>
</comment>
<reference key="1">
    <citation type="journal article" date="2007" name="Proc. Natl. Acad. Sci. U.S.A.">
        <title>Genome and proteome of long-chain alkane degrading Geobacillus thermodenitrificans NG80-2 isolated from a deep-subsurface oil reservoir.</title>
        <authorList>
            <person name="Feng L."/>
            <person name="Wang W."/>
            <person name="Cheng J."/>
            <person name="Ren Y."/>
            <person name="Zhao G."/>
            <person name="Gao C."/>
            <person name="Tang Y."/>
            <person name="Liu X."/>
            <person name="Han W."/>
            <person name="Peng X."/>
            <person name="Liu R."/>
            <person name="Wang L."/>
        </authorList>
    </citation>
    <scope>NUCLEOTIDE SEQUENCE [LARGE SCALE GENOMIC DNA]</scope>
    <source>
        <strain>NG80-2</strain>
    </source>
</reference>